<evidence type="ECO:0000255" key="1">
    <source>
        <dbReference type="HAMAP-Rule" id="MF_00001"/>
    </source>
</evidence>
<evidence type="ECO:0000305" key="2"/>
<feature type="chain" id="PRO_0000113159" description="Aspartate carbamoyltransferase catalytic subunit">
    <location>
        <begin position="1"/>
        <end position="319"/>
    </location>
</feature>
<feature type="binding site" evidence="1">
    <location>
        <position position="57"/>
    </location>
    <ligand>
        <name>carbamoyl phosphate</name>
        <dbReference type="ChEBI" id="CHEBI:58228"/>
    </ligand>
</feature>
<feature type="binding site" evidence="1">
    <location>
        <position position="58"/>
    </location>
    <ligand>
        <name>carbamoyl phosphate</name>
        <dbReference type="ChEBI" id="CHEBI:58228"/>
    </ligand>
</feature>
<feature type="binding site" evidence="1">
    <location>
        <position position="85"/>
    </location>
    <ligand>
        <name>L-aspartate</name>
        <dbReference type="ChEBI" id="CHEBI:29991"/>
    </ligand>
</feature>
<feature type="binding site" evidence="1">
    <location>
        <position position="107"/>
    </location>
    <ligand>
        <name>carbamoyl phosphate</name>
        <dbReference type="ChEBI" id="CHEBI:58228"/>
    </ligand>
</feature>
<feature type="binding site" evidence="1">
    <location>
        <position position="140"/>
    </location>
    <ligand>
        <name>carbamoyl phosphate</name>
        <dbReference type="ChEBI" id="CHEBI:58228"/>
    </ligand>
</feature>
<feature type="binding site" evidence="1">
    <location>
        <position position="143"/>
    </location>
    <ligand>
        <name>carbamoyl phosphate</name>
        <dbReference type="ChEBI" id="CHEBI:58228"/>
    </ligand>
</feature>
<feature type="binding site" evidence="1">
    <location>
        <position position="173"/>
    </location>
    <ligand>
        <name>L-aspartate</name>
        <dbReference type="ChEBI" id="CHEBI:29991"/>
    </ligand>
</feature>
<feature type="binding site" evidence="1">
    <location>
        <position position="227"/>
    </location>
    <ligand>
        <name>L-aspartate</name>
        <dbReference type="ChEBI" id="CHEBI:29991"/>
    </ligand>
</feature>
<feature type="binding site" evidence="1">
    <location>
        <position position="268"/>
    </location>
    <ligand>
        <name>carbamoyl phosphate</name>
        <dbReference type="ChEBI" id="CHEBI:58228"/>
    </ligand>
</feature>
<feature type="binding site" evidence="1">
    <location>
        <position position="269"/>
    </location>
    <ligand>
        <name>carbamoyl phosphate</name>
        <dbReference type="ChEBI" id="CHEBI:58228"/>
    </ligand>
</feature>
<reference key="1">
    <citation type="journal article" date="2003" name="Proc. Natl. Acad. Sci. U.S.A.">
        <title>The complete genome sequence of Mycobacterium bovis.</title>
        <authorList>
            <person name="Garnier T."/>
            <person name="Eiglmeier K."/>
            <person name="Camus J.-C."/>
            <person name="Medina N."/>
            <person name="Mansoor H."/>
            <person name="Pryor M."/>
            <person name="Duthoy S."/>
            <person name="Grondin S."/>
            <person name="Lacroix C."/>
            <person name="Monsempe C."/>
            <person name="Simon S."/>
            <person name="Harris B."/>
            <person name="Atkin R."/>
            <person name="Doggett J."/>
            <person name="Mayes R."/>
            <person name="Keating L."/>
            <person name="Wheeler P.R."/>
            <person name="Parkhill J."/>
            <person name="Barrell B.G."/>
            <person name="Cole S.T."/>
            <person name="Gordon S.V."/>
            <person name="Hewinson R.G."/>
        </authorList>
    </citation>
    <scope>NUCLEOTIDE SEQUENCE [LARGE SCALE GENOMIC DNA]</scope>
    <source>
        <strain>ATCC BAA-935 / AF2122/97</strain>
    </source>
</reference>
<reference key="2">
    <citation type="journal article" date="2017" name="Genome Announc.">
        <title>Updated reference genome sequence and annotation of Mycobacterium bovis AF2122/97.</title>
        <authorList>
            <person name="Malone K.M."/>
            <person name="Farrell D."/>
            <person name="Stuber T.P."/>
            <person name="Schubert O.T."/>
            <person name="Aebersold R."/>
            <person name="Robbe-Austerman S."/>
            <person name="Gordon S.V."/>
        </authorList>
    </citation>
    <scope>NUCLEOTIDE SEQUENCE [LARGE SCALE GENOMIC DNA]</scope>
    <scope>GENOME REANNOTATION</scope>
    <source>
        <strain>ATCC BAA-935 / AF2122/97</strain>
    </source>
</reference>
<keyword id="KW-0665">Pyrimidine biosynthesis</keyword>
<keyword id="KW-1185">Reference proteome</keyword>
<keyword id="KW-0808">Transferase</keyword>
<proteinExistence type="inferred from homology"/>
<organism>
    <name type="scientific">Mycobacterium bovis (strain ATCC BAA-935 / AF2122/97)</name>
    <dbReference type="NCBI Taxonomy" id="233413"/>
    <lineage>
        <taxon>Bacteria</taxon>
        <taxon>Bacillati</taxon>
        <taxon>Actinomycetota</taxon>
        <taxon>Actinomycetes</taxon>
        <taxon>Mycobacteriales</taxon>
        <taxon>Mycobacteriaceae</taxon>
        <taxon>Mycobacterium</taxon>
        <taxon>Mycobacterium tuberculosis complex</taxon>
    </lineage>
</organism>
<protein>
    <recommendedName>
        <fullName evidence="1">Aspartate carbamoyltransferase catalytic subunit</fullName>
        <ecNumber evidence="1">2.1.3.2</ecNumber>
    </recommendedName>
    <alternativeName>
        <fullName evidence="1">Aspartate transcarbamylase</fullName>
        <shortName evidence="1">ATCase</shortName>
    </alternativeName>
</protein>
<name>PYRB_MYCBO</name>
<dbReference type="EC" id="2.1.3.2" evidence="1"/>
<dbReference type="EMBL" id="LT708304">
    <property type="protein sequence ID" value="SIU00018.1"/>
    <property type="molecule type" value="Genomic_DNA"/>
</dbReference>
<dbReference type="RefSeq" id="NP_855067.1">
    <property type="nucleotide sequence ID" value="NC_002945.3"/>
</dbReference>
<dbReference type="RefSeq" id="WP_003407200.1">
    <property type="nucleotide sequence ID" value="NC_002945.4"/>
</dbReference>
<dbReference type="SMR" id="P65614"/>
<dbReference type="KEGG" id="mbo:BQ2027_MB1415"/>
<dbReference type="PATRIC" id="fig|233413.5.peg.1550"/>
<dbReference type="UniPathway" id="UPA00070">
    <property type="reaction ID" value="UER00116"/>
</dbReference>
<dbReference type="Proteomes" id="UP000001419">
    <property type="component" value="Chromosome"/>
</dbReference>
<dbReference type="GO" id="GO:0005829">
    <property type="term" value="C:cytosol"/>
    <property type="evidence" value="ECO:0007669"/>
    <property type="project" value="TreeGrafter"/>
</dbReference>
<dbReference type="GO" id="GO:0016597">
    <property type="term" value="F:amino acid binding"/>
    <property type="evidence" value="ECO:0007669"/>
    <property type="project" value="InterPro"/>
</dbReference>
<dbReference type="GO" id="GO:0004070">
    <property type="term" value="F:aspartate carbamoyltransferase activity"/>
    <property type="evidence" value="ECO:0007669"/>
    <property type="project" value="UniProtKB-UniRule"/>
</dbReference>
<dbReference type="GO" id="GO:0006207">
    <property type="term" value="P:'de novo' pyrimidine nucleobase biosynthetic process"/>
    <property type="evidence" value="ECO:0007669"/>
    <property type="project" value="InterPro"/>
</dbReference>
<dbReference type="GO" id="GO:0044205">
    <property type="term" value="P:'de novo' UMP biosynthetic process"/>
    <property type="evidence" value="ECO:0007669"/>
    <property type="project" value="UniProtKB-UniRule"/>
</dbReference>
<dbReference type="GO" id="GO:0006520">
    <property type="term" value="P:amino acid metabolic process"/>
    <property type="evidence" value="ECO:0007669"/>
    <property type="project" value="InterPro"/>
</dbReference>
<dbReference type="FunFam" id="3.40.50.1370:FF:000007">
    <property type="entry name" value="Aspartate carbamoyltransferase"/>
    <property type="match status" value="1"/>
</dbReference>
<dbReference type="FunFam" id="3.40.50.1370:FF:000012">
    <property type="entry name" value="Aspartate carbamoyltransferase"/>
    <property type="match status" value="1"/>
</dbReference>
<dbReference type="Gene3D" id="3.40.50.1370">
    <property type="entry name" value="Aspartate/ornithine carbamoyltransferase"/>
    <property type="match status" value="2"/>
</dbReference>
<dbReference type="HAMAP" id="MF_00001">
    <property type="entry name" value="Asp_carb_tr"/>
    <property type="match status" value="1"/>
</dbReference>
<dbReference type="InterPro" id="IPR006132">
    <property type="entry name" value="Asp/Orn_carbamoyltranf_P-bd"/>
</dbReference>
<dbReference type="InterPro" id="IPR006130">
    <property type="entry name" value="Asp/Orn_carbamoylTrfase"/>
</dbReference>
<dbReference type="InterPro" id="IPR036901">
    <property type="entry name" value="Asp/Orn_carbamoylTrfase_sf"/>
</dbReference>
<dbReference type="InterPro" id="IPR002082">
    <property type="entry name" value="Asp_carbamoyltransf"/>
</dbReference>
<dbReference type="InterPro" id="IPR006131">
    <property type="entry name" value="Asp_carbamoyltransf_Asp/Orn-bd"/>
</dbReference>
<dbReference type="NCBIfam" id="TIGR00670">
    <property type="entry name" value="asp_carb_tr"/>
    <property type="match status" value="1"/>
</dbReference>
<dbReference type="NCBIfam" id="NF002032">
    <property type="entry name" value="PRK00856.1"/>
    <property type="match status" value="1"/>
</dbReference>
<dbReference type="PANTHER" id="PTHR45753:SF6">
    <property type="entry name" value="ASPARTATE CARBAMOYLTRANSFERASE"/>
    <property type="match status" value="1"/>
</dbReference>
<dbReference type="PANTHER" id="PTHR45753">
    <property type="entry name" value="ORNITHINE CARBAMOYLTRANSFERASE, MITOCHONDRIAL"/>
    <property type="match status" value="1"/>
</dbReference>
<dbReference type="Pfam" id="PF00185">
    <property type="entry name" value="OTCace"/>
    <property type="match status" value="1"/>
</dbReference>
<dbReference type="Pfam" id="PF02729">
    <property type="entry name" value="OTCace_N"/>
    <property type="match status" value="1"/>
</dbReference>
<dbReference type="PRINTS" id="PR00100">
    <property type="entry name" value="AOTCASE"/>
</dbReference>
<dbReference type="PRINTS" id="PR00101">
    <property type="entry name" value="ATCASE"/>
</dbReference>
<dbReference type="SUPFAM" id="SSF53671">
    <property type="entry name" value="Aspartate/ornithine carbamoyltransferase"/>
    <property type="match status" value="1"/>
</dbReference>
<dbReference type="PROSITE" id="PS00097">
    <property type="entry name" value="CARBAMOYLTRANSFERASE"/>
    <property type="match status" value="1"/>
</dbReference>
<accession>P65614</accession>
<accession>A0A1R3XY75</accession>
<accession>P71808</accession>
<accession>X2BHX3</accession>
<gene>
    <name evidence="1" type="primary">pyrB</name>
    <name type="ordered locus">BQ2027_MB1415</name>
</gene>
<sequence>MTPRHLLTAADLSRDDATAILDDADRFAQALVGRDIKKLPTLRGRTVVTMFYENSTRTRVSFEVAGKWMSADVINVSAAGSSVGKGESLRDTALTLRAAGADALIIRHPASGAAHLLAQWTGAHNDGPAVINAGDGTHEHPTQALLDALTIRQRLGGIEGRRIVIVGDILHSRVARSNVMLLDTLGAEVVLVAPPTLLPVGVTGWPATVSHDFDAELPAADAVLMLRVQAERMNGGFFPSVREYSVRYGLTERRQAMLPGHAVVLHPGPMVRGMEITSSVADSSQSAVLQQVSNGVQVRMAVLFHVLVGAQDAGKEGAA</sequence>
<comment type="function">
    <text evidence="1">Catalyzes the condensation of carbamoyl phosphate and aspartate to form carbamoyl aspartate and inorganic phosphate, the committed step in the de novo pyrimidine nucleotide biosynthesis pathway.</text>
</comment>
<comment type="catalytic activity">
    <reaction evidence="1">
        <text>carbamoyl phosphate + L-aspartate = N-carbamoyl-L-aspartate + phosphate + H(+)</text>
        <dbReference type="Rhea" id="RHEA:20013"/>
        <dbReference type="ChEBI" id="CHEBI:15378"/>
        <dbReference type="ChEBI" id="CHEBI:29991"/>
        <dbReference type="ChEBI" id="CHEBI:32814"/>
        <dbReference type="ChEBI" id="CHEBI:43474"/>
        <dbReference type="ChEBI" id="CHEBI:58228"/>
        <dbReference type="EC" id="2.1.3.2"/>
    </reaction>
</comment>
<comment type="pathway">
    <text evidence="1">Pyrimidine metabolism; UMP biosynthesis via de novo pathway; (S)-dihydroorotate from bicarbonate: step 2/3.</text>
</comment>
<comment type="subunit">
    <text evidence="1">Heterododecamer (2C3:3R2) of six catalytic PyrB chains organized as two trimers (C3), and six regulatory PyrI chains organized as three dimers (R2).</text>
</comment>
<comment type="similarity">
    <text evidence="1 2">Belongs to the aspartate/ornithine carbamoyltransferase superfamily. ATCase family.</text>
</comment>